<feature type="chain" id="PRO_0000403674" description="Fructose-1,6-bisphosphatase class 2">
    <location>
        <begin position="1"/>
        <end position="362"/>
    </location>
</feature>
<feature type="region of interest" description="Disordered" evidence="2">
    <location>
        <begin position="1"/>
        <end position="32"/>
    </location>
</feature>
<feature type="compositionally biased region" description="Polar residues" evidence="2">
    <location>
        <begin position="1"/>
        <end position="12"/>
    </location>
</feature>
<feature type="compositionally biased region" description="Basic and acidic residues" evidence="2">
    <location>
        <begin position="17"/>
        <end position="30"/>
    </location>
</feature>
<feature type="binding site" evidence="1">
    <location>
        <position position="61"/>
    </location>
    <ligand>
        <name>Mn(2+)</name>
        <dbReference type="ChEBI" id="CHEBI:29035"/>
        <label>1</label>
    </ligand>
</feature>
<feature type="binding site" evidence="1">
    <location>
        <position position="85"/>
    </location>
    <ligand>
        <name>Mn(2+)</name>
        <dbReference type="ChEBI" id="CHEBI:29035"/>
        <label>1</label>
    </ligand>
</feature>
<feature type="binding site" evidence="1">
    <location>
        <position position="113"/>
    </location>
    <ligand>
        <name>Mn(2+)</name>
        <dbReference type="ChEBI" id="CHEBI:29035"/>
        <label>2</label>
    </ligand>
</feature>
<feature type="binding site" evidence="1">
    <location>
        <begin position="116"/>
        <end position="118"/>
    </location>
    <ligand>
        <name>substrate</name>
    </ligand>
</feature>
<feature type="binding site" evidence="1">
    <location>
        <position position="116"/>
    </location>
    <ligand>
        <name>Mn(2+)</name>
        <dbReference type="ChEBI" id="CHEBI:29035"/>
        <label>2</label>
    </ligand>
</feature>
<feature type="binding site" evidence="1">
    <location>
        <position position="148"/>
    </location>
    <ligand>
        <name>substrate</name>
    </ligand>
</feature>
<feature type="binding site" evidence="1">
    <location>
        <begin position="193"/>
        <end position="195"/>
    </location>
    <ligand>
        <name>substrate</name>
    </ligand>
</feature>
<feature type="binding site" evidence="1">
    <location>
        <begin position="215"/>
        <end position="217"/>
    </location>
    <ligand>
        <name>substrate</name>
    </ligand>
</feature>
<feature type="binding site" evidence="1">
    <location>
        <position position="239"/>
    </location>
    <ligand>
        <name>substrate</name>
    </ligand>
</feature>
<feature type="binding site" evidence="1">
    <location>
        <position position="242"/>
    </location>
    <ligand>
        <name>Mn(2+)</name>
        <dbReference type="ChEBI" id="CHEBI:29035"/>
        <label>2</label>
    </ligand>
</feature>
<sequence length="362" mass="38084">MTAEGSGSSTAAVASHDPSHTRPSRREAPDRNLAMELVRVTEAGAMAAGRWVGRGDKEGGDGAAVDAMRELVNSVSMRGVVVIGEGEKDHAPMLYNGEEVGNGDGPECDFAVDPIDGTTLMSKGMTNAISVLAVADRGTMFDPSAVFYMNKIAVGPDAAHVLDITAPISENIRAVAKVKDLSVRDMTVCILDRPRHAQLIHDVRATGARIRLITDGDVAGAISACRPHSGTDLLAGIGGTPEGIIAAAAIRCMGGAIQAQLAPRDDAERRKALEAGYDLNQVLTTEDLVSGENVFFCATGVTDGDLLKGVRYYPGGCTTHSIVMRSKSGTVRMIEAYHRLSKLNEYSAIDFTGDSSAVYPLP</sequence>
<reference key="1">
    <citation type="journal article" date="2003" name="Proc. Natl. Acad. Sci. U.S.A.">
        <title>The complete genome sequence of Mycobacterium bovis.</title>
        <authorList>
            <person name="Garnier T."/>
            <person name="Eiglmeier K."/>
            <person name="Camus J.-C."/>
            <person name="Medina N."/>
            <person name="Mansoor H."/>
            <person name="Pryor M."/>
            <person name="Duthoy S."/>
            <person name="Grondin S."/>
            <person name="Lacroix C."/>
            <person name="Monsempe C."/>
            <person name="Simon S."/>
            <person name="Harris B."/>
            <person name="Atkin R."/>
            <person name="Doggett J."/>
            <person name="Mayes R."/>
            <person name="Keating L."/>
            <person name="Wheeler P.R."/>
            <person name="Parkhill J."/>
            <person name="Barrell B.G."/>
            <person name="Cole S.T."/>
            <person name="Gordon S.V."/>
            <person name="Hewinson R.G."/>
        </authorList>
    </citation>
    <scope>NUCLEOTIDE SEQUENCE [LARGE SCALE GENOMIC DNA]</scope>
    <source>
        <strain>ATCC BAA-935 / AF2122/97</strain>
    </source>
</reference>
<reference key="2">
    <citation type="journal article" date="2017" name="Genome Announc.">
        <title>Updated reference genome sequence and annotation of Mycobacterium bovis AF2122/97.</title>
        <authorList>
            <person name="Malone K.M."/>
            <person name="Farrell D."/>
            <person name="Stuber T.P."/>
            <person name="Schubert O.T."/>
            <person name="Aebersold R."/>
            <person name="Robbe-Austerman S."/>
            <person name="Gordon S.V."/>
        </authorList>
    </citation>
    <scope>NUCLEOTIDE SEQUENCE [LARGE SCALE GENOMIC DNA]</scope>
    <scope>GENOME REANNOTATION</scope>
    <source>
        <strain>ATCC BAA-935 / AF2122/97</strain>
    </source>
</reference>
<dbReference type="EC" id="3.1.3.11"/>
<dbReference type="EMBL" id="LT708304">
    <property type="protein sequence ID" value="SIT99729.1"/>
    <property type="molecule type" value="Genomic_DNA"/>
</dbReference>
<dbReference type="RefSeq" id="WP_003898726.1">
    <property type="nucleotide sequence ID" value="NC_002945.4"/>
</dbReference>
<dbReference type="SMR" id="Q7U0N5"/>
<dbReference type="GeneID" id="45425073"/>
<dbReference type="KEGG" id="mbo:BQ2027_MB1129C"/>
<dbReference type="PATRIC" id="fig|233413.5.peg.1235"/>
<dbReference type="UniPathway" id="UPA00138"/>
<dbReference type="Proteomes" id="UP000001419">
    <property type="component" value="Chromosome"/>
</dbReference>
<dbReference type="GO" id="GO:0005829">
    <property type="term" value="C:cytosol"/>
    <property type="evidence" value="ECO:0007669"/>
    <property type="project" value="TreeGrafter"/>
</dbReference>
<dbReference type="GO" id="GO:0042132">
    <property type="term" value="F:fructose 1,6-bisphosphate 1-phosphatase activity"/>
    <property type="evidence" value="ECO:0007669"/>
    <property type="project" value="UniProtKB-EC"/>
</dbReference>
<dbReference type="GO" id="GO:0046872">
    <property type="term" value="F:metal ion binding"/>
    <property type="evidence" value="ECO:0007669"/>
    <property type="project" value="UniProtKB-KW"/>
</dbReference>
<dbReference type="GO" id="GO:0030388">
    <property type="term" value="P:fructose 1,6-bisphosphate metabolic process"/>
    <property type="evidence" value="ECO:0007669"/>
    <property type="project" value="TreeGrafter"/>
</dbReference>
<dbReference type="GO" id="GO:0006094">
    <property type="term" value="P:gluconeogenesis"/>
    <property type="evidence" value="ECO:0007669"/>
    <property type="project" value="UniProtKB-UniPathway"/>
</dbReference>
<dbReference type="GO" id="GO:0006071">
    <property type="term" value="P:glycerol metabolic process"/>
    <property type="evidence" value="ECO:0007669"/>
    <property type="project" value="InterPro"/>
</dbReference>
<dbReference type="CDD" id="cd01516">
    <property type="entry name" value="FBPase_glpX"/>
    <property type="match status" value="1"/>
</dbReference>
<dbReference type="FunFam" id="3.40.190.90:FF:000001">
    <property type="entry name" value="Fructose-1,6-bisphosphatase"/>
    <property type="match status" value="1"/>
</dbReference>
<dbReference type="Gene3D" id="3.40.190.90">
    <property type="match status" value="1"/>
</dbReference>
<dbReference type="Gene3D" id="3.30.540.10">
    <property type="entry name" value="Fructose-1,6-Bisphosphatase, subunit A, domain 1"/>
    <property type="match status" value="1"/>
</dbReference>
<dbReference type="InterPro" id="IPR004464">
    <property type="entry name" value="FBPase_class-2/SBPase"/>
</dbReference>
<dbReference type="NCBIfam" id="TIGR00330">
    <property type="entry name" value="glpX"/>
    <property type="match status" value="1"/>
</dbReference>
<dbReference type="PANTHER" id="PTHR30447:SF0">
    <property type="entry name" value="FRUCTOSE-1,6-BISPHOSPHATASE 1 CLASS 2-RELATED"/>
    <property type="match status" value="1"/>
</dbReference>
<dbReference type="PANTHER" id="PTHR30447">
    <property type="entry name" value="FRUCTOSE-1,6-BISPHOSPHATASE CLASS 2"/>
    <property type="match status" value="1"/>
</dbReference>
<dbReference type="Pfam" id="PF03320">
    <property type="entry name" value="FBPase_glpX"/>
    <property type="match status" value="1"/>
</dbReference>
<dbReference type="PIRSF" id="PIRSF004532">
    <property type="entry name" value="GlpX"/>
    <property type="match status" value="1"/>
</dbReference>
<dbReference type="SUPFAM" id="SSF56655">
    <property type="entry name" value="Carbohydrate phosphatase"/>
    <property type="match status" value="1"/>
</dbReference>
<comment type="function">
    <text evidence="1">Catalyzes the hydrolysis of fructose 1,6-bisphosphate to fructose 6-phosphate.</text>
</comment>
<comment type="catalytic activity">
    <reaction>
        <text>beta-D-fructose 1,6-bisphosphate + H2O = beta-D-fructose 6-phosphate + phosphate</text>
        <dbReference type="Rhea" id="RHEA:11064"/>
        <dbReference type="ChEBI" id="CHEBI:15377"/>
        <dbReference type="ChEBI" id="CHEBI:32966"/>
        <dbReference type="ChEBI" id="CHEBI:43474"/>
        <dbReference type="ChEBI" id="CHEBI:57634"/>
        <dbReference type="EC" id="3.1.3.11"/>
    </reaction>
</comment>
<comment type="cofactor">
    <cofactor evidence="1">
        <name>Mn(2+)</name>
        <dbReference type="ChEBI" id="CHEBI:29035"/>
    </cofactor>
</comment>
<comment type="pathway">
    <text>Carbohydrate biosynthesis; gluconeogenesis.</text>
</comment>
<comment type="subcellular location">
    <subcellularLocation>
        <location evidence="1">Cytoplasm</location>
    </subcellularLocation>
</comment>
<comment type="similarity">
    <text evidence="3">Belongs to the FBPase class 2 family.</text>
</comment>
<name>GLPX_MYCBO</name>
<keyword id="KW-0119">Carbohydrate metabolism</keyword>
<keyword id="KW-0963">Cytoplasm</keyword>
<keyword id="KW-0378">Hydrolase</keyword>
<keyword id="KW-0464">Manganese</keyword>
<keyword id="KW-0479">Metal-binding</keyword>
<keyword id="KW-1185">Reference proteome</keyword>
<accession>Q7U0N5</accession>
<accession>A0A1R3XXD7</accession>
<accession>X2BHA1</accession>
<gene>
    <name type="primary">glpX</name>
    <name type="ordered locus">BQ2027_MB1129C</name>
</gene>
<organism>
    <name type="scientific">Mycobacterium bovis (strain ATCC BAA-935 / AF2122/97)</name>
    <dbReference type="NCBI Taxonomy" id="233413"/>
    <lineage>
        <taxon>Bacteria</taxon>
        <taxon>Bacillati</taxon>
        <taxon>Actinomycetota</taxon>
        <taxon>Actinomycetes</taxon>
        <taxon>Mycobacteriales</taxon>
        <taxon>Mycobacteriaceae</taxon>
        <taxon>Mycobacterium</taxon>
        <taxon>Mycobacterium tuberculosis complex</taxon>
    </lineage>
</organism>
<protein>
    <recommendedName>
        <fullName>Fructose-1,6-bisphosphatase class 2</fullName>
        <shortName>FBPase class 2</shortName>
        <ecNumber>3.1.3.11</ecNumber>
    </recommendedName>
    <alternativeName>
        <fullName>D-fructose-1,6-bisphosphate 1-phosphohydrolase class 2</fullName>
    </alternativeName>
</protein>
<evidence type="ECO:0000250" key="1"/>
<evidence type="ECO:0000256" key="2">
    <source>
        <dbReference type="SAM" id="MobiDB-lite"/>
    </source>
</evidence>
<evidence type="ECO:0000305" key="3"/>
<proteinExistence type="inferred from homology"/>